<protein>
    <recommendedName>
        <fullName evidence="1">Adenosine deaminase</fullName>
        <ecNumber evidence="1">3.5.4.4</ecNumber>
    </recommendedName>
    <alternativeName>
        <fullName evidence="1">Adenosine aminohydrolase</fullName>
    </alternativeName>
</protein>
<proteinExistence type="inferred from homology"/>
<evidence type="ECO:0000255" key="1">
    <source>
        <dbReference type="HAMAP-Rule" id="MF_00540"/>
    </source>
</evidence>
<sequence length="335" mass="37683">MNFKKLPKIELHCHLDGSLRIDTILDIAKKDNIPLPSYNKKELINYVSIMDDCNSLDEYLNKFFIPNKVMQTKENLKRIAFELLEDVAADNVKYIEVRFAPLLHVEKGLNIEEIIESVLAGIKEAEKLYDIKGNLILGCMRNMDIPSAFEVVKKGAKFIGKGVVAIDLCAGEEPHFPGKYIEVLKLAKECGYRITIHAGEAGVGENVLEAINLLNAERIGHGIYIKNCAEAYKLVKEKNIPLEVCPTSNLHTKAFESYETHPFMDFLKDGIKVTINTDNMTVSNTTITKELEMLNKFCGLSIEDYKILYLNAVEASFASPETKEILKSYANEITA</sequence>
<gene>
    <name evidence="1" type="primary">add</name>
    <name type="ordered locus">CBO0991</name>
    <name type="ordered locus">CLC_1043</name>
</gene>
<comment type="function">
    <text evidence="1">Catalyzes the hydrolytic deamination of adenosine and 2-deoxyadenosine.</text>
</comment>
<comment type="catalytic activity">
    <reaction evidence="1">
        <text>adenosine + H2O + H(+) = inosine + NH4(+)</text>
        <dbReference type="Rhea" id="RHEA:24408"/>
        <dbReference type="ChEBI" id="CHEBI:15377"/>
        <dbReference type="ChEBI" id="CHEBI:15378"/>
        <dbReference type="ChEBI" id="CHEBI:16335"/>
        <dbReference type="ChEBI" id="CHEBI:17596"/>
        <dbReference type="ChEBI" id="CHEBI:28938"/>
        <dbReference type="EC" id="3.5.4.4"/>
    </reaction>
    <physiologicalReaction direction="left-to-right" evidence="1">
        <dbReference type="Rhea" id="RHEA:24409"/>
    </physiologicalReaction>
</comment>
<comment type="catalytic activity">
    <reaction evidence="1">
        <text>2'-deoxyadenosine + H2O + H(+) = 2'-deoxyinosine + NH4(+)</text>
        <dbReference type="Rhea" id="RHEA:28190"/>
        <dbReference type="ChEBI" id="CHEBI:15377"/>
        <dbReference type="ChEBI" id="CHEBI:15378"/>
        <dbReference type="ChEBI" id="CHEBI:17256"/>
        <dbReference type="ChEBI" id="CHEBI:28938"/>
        <dbReference type="ChEBI" id="CHEBI:28997"/>
        <dbReference type="EC" id="3.5.4.4"/>
    </reaction>
    <physiologicalReaction direction="left-to-right" evidence="1">
        <dbReference type="Rhea" id="RHEA:28191"/>
    </physiologicalReaction>
</comment>
<comment type="cofactor">
    <cofactor evidence="1">
        <name>Zn(2+)</name>
        <dbReference type="ChEBI" id="CHEBI:29105"/>
    </cofactor>
    <text evidence="1">Binds 1 zinc ion per subunit.</text>
</comment>
<comment type="similarity">
    <text evidence="1">Belongs to the metallo-dependent hydrolases superfamily. Adenosine and AMP deaminases family. Adenosine deaminase subfamily.</text>
</comment>
<dbReference type="EC" id="3.5.4.4" evidence="1"/>
<dbReference type="EMBL" id="CP000727">
    <property type="protein sequence ID" value="ABS37648.1"/>
    <property type="molecule type" value="Genomic_DNA"/>
</dbReference>
<dbReference type="EMBL" id="AM412317">
    <property type="protein sequence ID" value="CAL82543.1"/>
    <property type="molecule type" value="Genomic_DNA"/>
</dbReference>
<dbReference type="RefSeq" id="WP_011948672.1">
    <property type="nucleotide sequence ID" value="NC_009698.1"/>
</dbReference>
<dbReference type="RefSeq" id="YP_001253522.1">
    <property type="nucleotide sequence ID" value="NC_009495.1"/>
</dbReference>
<dbReference type="RefSeq" id="YP_001386911.1">
    <property type="nucleotide sequence ID" value="NC_009698.1"/>
</dbReference>
<dbReference type="SMR" id="A5I0I2"/>
<dbReference type="GeneID" id="5185246"/>
<dbReference type="KEGG" id="cbh:CLC_1043"/>
<dbReference type="KEGG" id="cbo:CBO0991"/>
<dbReference type="PATRIC" id="fig|413999.7.peg.986"/>
<dbReference type="HOGENOM" id="CLU_039228_0_0_9"/>
<dbReference type="PRO" id="PR:A5I0I2"/>
<dbReference type="Proteomes" id="UP000001986">
    <property type="component" value="Chromosome"/>
</dbReference>
<dbReference type="GO" id="GO:0005829">
    <property type="term" value="C:cytosol"/>
    <property type="evidence" value="ECO:0000318"/>
    <property type="project" value="GO_Central"/>
</dbReference>
<dbReference type="GO" id="GO:0046936">
    <property type="term" value="F:2'-deoxyadenosine deaminase activity"/>
    <property type="evidence" value="ECO:0007669"/>
    <property type="project" value="RHEA"/>
</dbReference>
<dbReference type="GO" id="GO:0004000">
    <property type="term" value="F:adenosine deaminase activity"/>
    <property type="evidence" value="ECO:0000318"/>
    <property type="project" value="GO_Central"/>
</dbReference>
<dbReference type="GO" id="GO:0008270">
    <property type="term" value="F:zinc ion binding"/>
    <property type="evidence" value="ECO:0007669"/>
    <property type="project" value="UniProtKB-UniRule"/>
</dbReference>
<dbReference type="GO" id="GO:0006154">
    <property type="term" value="P:adenosine catabolic process"/>
    <property type="evidence" value="ECO:0000318"/>
    <property type="project" value="GO_Central"/>
</dbReference>
<dbReference type="GO" id="GO:0043103">
    <property type="term" value="P:hypoxanthine salvage"/>
    <property type="evidence" value="ECO:0000318"/>
    <property type="project" value="GO_Central"/>
</dbReference>
<dbReference type="GO" id="GO:0046103">
    <property type="term" value="P:inosine biosynthetic process"/>
    <property type="evidence" value="ECO:0000318"/>
    <property type="project" value="GO_Central"/>
</dbReference>
<dbReference type="GO" id="GO:0009117">
    <property type="term" value="P:nucleotide metabolic process"/>
    <property type="evidence" value="ECO:0007669"/>
    <property type="project" value="UniProtKB-KW"/>
</dbReference>
<dbReference type="GO" id="GO:0009168">
    <property type="term" value="P:purine ribonucleoside monophosphate biosynthetic process"/>
    <property type="evidence" value="ECO:0007669"/>
    <property type="project" value="UniProtKB-UniRule"/>
</dbReference>
<dbReference type="CDD" id="cd01320">
    <property type="entry name" value="ADA"/>
    <property type="match status" value="1"/>
</dbReference>
<dbReference type="FunFam" id="3.20.20.140:FF:000093">
    <property type="entry name" value="Adenosine deaminase"/>
    <property type="match status" value="1"/>
</dbReference>
<dbReference type="Gene3D" id="3.20.20.140">
    <property type="entry name" value="Metal-dependent hydrolases"/>
    <property type="match status" value="1"/>
</dbReference>
<dbReference type="HAMAP" id="MF_00540">
    <property type="entry name" value="A_deaminase"/>
    <property type="match status" value="1"/>
</dbReference>
<dbReference type="InterPro" id="IPR028893">
    <property type="entry name" value="A_deaminase"/>
</dbReference>
<dbReference type="InterPro" id="IPR001365">
    <property type="entry name" value="A_deaminase_dom"/>
</dbReference>
<dbReference type="InterPro" id="IPR006330">
    <property type="entry name" value="Ado/ade_deaminase"/>
</dbReference>
<dbReference type="InterPro" id="IPR032466">
    <property type="entry name" value="Metal_Hydrolase"/>
</dbReference>
<dbReference type="NCBIfam" id="TIGR01430">
    <property type="entry name" value="aden_deam"/>
    <property type="match status" value="1"/>
</dbReference>
<dbReference type="PANTHER" id="PTHR11409">
    <property type="entry name" value="ADENOSINE DEAMINASE"/>
    <property type="match status" value="1"/>
</dbReference>
<dbReference type="PANTHER" id="PTHR11409:SF43">
    <property type="entry name" value="ADENOSINE DEAMINASE"/>
    <property type="match status" value="1"/>
</dbReference>
<dbReference type="Pfam" id="PF00962">
    <property type="entry name" value="A_deaminase"/>
    <property type="match status" value="1"/>
</dbReference>
<dbReference type="SUPFAM" id="SSF51556">
    <property type="entry name" value="Metallo-dependent hydrolases"/>
    <property type="match status" value="1"/>
</dbReference>
<accession>A5I0I2</accession>
<accession>A7FZQ5</accession>
<feature type="chain" id="PRO_1000017655" description="Adenosine deaminase">
    <location>
        <begin position="1"/>
        <end position="335"/>
    </location>
</feature>
<feature type="active site" description="Proton donor" evidence="1">
    <location>
        <position position="200"/>
    </location>
</feature>
<feature type="binding site" evidence="1">
    <location>
        <position position="12"/>
    </location>
    <ligand>
        <name>Zn(2+)</name>
        <dbReference type="ChEBI" id="CHEBI:29105"/>
        <note>catalytic</note>
    </ligand>
</feature>
<feature type="binding site" evidence="1">
    <location>
        <position position="14"/>
    </location>
    <ligand>
        <name>substrate</name>
    </ligand>
</feature>
<feature type="binding site" evidence="1">
    <location>
        <position position="14"/>
    </location>
    <ligand>
        <name>Zn(2+)</name>
        <dbReference type="ChEBI" id="CHEBI:29105"/>
        <note>catalytic</note>
    </ligand>
</feature>
<feature type="binding site" evidence="1">
    <location>
        <position position="16"/>
    </location>
    <ligand>
        <name>substrate</name>
    </ligand>
</feature>
<feature type="binding site" evidence="1">
    <location>
        <position position="197"/>
    </location>
    <ligand>
        <name>Zn(2+)</name>
        <dbReference type="ChEBI" id="CHEBI:29105"/>
        <note>catalytic</note>
    </ligand>
</feature>
<feature type="binding site" evidence="1">
    <location>
        <position position="278"/>
    </location>
    <ligand>
        <name>Zn(2+)</name>
        <dbReference type="ChEBI" id="CHEBI:29105"/>
        <note>catalytic</note>
    </ligand>
</feature>
<feature type="site" description="Important for catalytic activity" evidence="1">
    <location>
        <position position="221"/>
    </location>
</feature>
<organism>
    <name type="scientific">Clostridium botulinum (strain Hall / ATCC 3502 / NCTC 13319 / Type A)</name>
    <dbReference type="NCBI Taxonomy" id="441771"/>
    <lineage>
        <taxon>Bacteria</taxon>
        <taxon>Bacillati</taxon>
        <taxon>Bacillota</taxon>
        <taxon>Clostridia</taxon>
        <taxon>Eubacteriales</taxon>
        <taxon>Clostridiaceae</taxon>
        <taxon>Clostridium</taxon>
    </lineage>
</organism>
<reference key="1">
    <citation type="journal article" date="2007" name="Genome Res.">
        <title>Genome sequence of a proteolytic (Group I) Clostridium botulinum strain Hall A and comparative analysis of the clostridial genomes.</title>
        <authorList>
            <person name="Sebaihia M."/>
            <person name="Peck M.W."/>
            <person name="Minton N.P."/>
            <person name="Thomson N.R."/>
            <person name="Holden M.T.G."/>
            <person name="Mitchell W.J."/>
            <person name="Carter A.T."/>
            <person name="Bentley S.D."/>
            <person name="Mason D.R."/>
            <person name="Crossman L."/>
            <person name="Paul C.J."/>
            <person name="Ivens A."/>
            <person name="Wells-Bennik M.H.J."/>
            <person name="Davis I.J."/>
            <person name="Cerdeno-Tarraga A.M."/>
            <person name="Churcher C."/>
            <person name="Quail M.A."/>
            <person name="Chillingworth T."/>
            <person name="Feltwell T."/>
            <person name="Fraser A."/>
            <person name="Goodhead I."/>
            <person name="Hance Z."/>
            <person name="Jagels K."/>
            <person name="Larke N."/>
            <person name="Maddison M."/>
            <person name="Moule S."/>
            <person name="Mungall K."/>
            <person name="Norbertczak H."/>
            <person name="Rabbinowitsch E."/>
            <person name="Sanders M."/>
            <person name="Simmonds M."/>
            <person name="White B."/>
            <person name="Whithead S."/>
            <person name="Parkhill J."/>
        </authorList>
    </citation>
    <scope>NUCLEOTIDE SEQUENCE [LARGE SCALE GENOMIC DNA]</scope>
    <source>
        <strain>Hall / ATCC 3502 / NCTC 13319 / Type A</strain>
    </source>
</reference>
<reference key="2">
    <citation type="journal article" date="2007" name="PLoS ONE">
        <title>Analysis of the neurotoxin complex genes in Clostridium botulinum A1-A4 and B1 strains: BoNT/A3, /Ba4 and /B1 clusters are located within plasmids.</title>
        <authorList>
            <person name="Smith T.J."/>
            <person name="Hill K.K."/>
            <person name="Foley B.T."/>
            <person name="Detter J.C."/>
            <person name="Munk A.C."/>
            <person name="Bruce D.C."/>
            <person name="Doggett N.A."/>
            <person name="Smith L.A."/>
            <person name="Marks J.D."/>
            <person name="Xie G."/>
            <person name="Brettin T.S."/>
        </authorList>
    </citation>
    <scope>NUCLEOTIDE SEQUENCE [LARGE SCALE GENOMIC DNA]</scope>
    <source>
        <strain>Hall / ATCC 3502 / NCTC 13319 / Type A</strain>
    </source>
</reference>
<name>ADD_CLOBH</name>
<keyword id="KW-0378">Hydrolase</keyword>
<keyword id="KW-0479">Metal-binding</keyword>
<keyword id="KW-0546">Nucleotide metabolism</keyword>
<keyword id="KW-1185">Reference proteome</keyword>
<keyword id="KW-0862">Zinc</keyword>